<accession>Q9SWI1</accession>
<accession>O80610</accession>
<protein>
    <recommendedName>
        <fullName>Protein PHYTOCHROME KINASE SUBSTRATE 1</fullName>
    </recommendedName>
</protein>
<gene>
    <name type="primary">PKS1</name>
    <name type="ordered locus">At2g02950</name>
    <name type="ORF">T17M13.12</name>
</gene>
<sequence>MVTLTPSSASTPKTSFDFMKNNNSHSSLYVSSSSYLSSKEDALVTTKKLMEPSKTLNMSINPKQEEFGDEKKMVKKAPEDPEIGVFGAEKYFNGDMDSDQGSSVLSLTNPEVERTVVDSKQSAKKSTGTPSVRSESSWNSQSVLLQNKLVNSCNSSFKEKKNSNGQIQKVTNNKKSFLANLGCKCACSDGDSVDVEEKTSVKRSADPNISVITMRSSADMNTELIKIQKQEELSQRKSLEVFGSPVAIEKKSSVVQKKLPLPPWKSRTEEDDTKSEGSDSSSDLFEIEGLTGNPKPFLTRQGSDPASPTCYAPSEVSVEWSIVTASAADFSVMSECATSPVRRNRPTQIPRIPITAKSAPQRRKSSSSSGGNGFLMSCKSHKSVMVSGDLDRRSSMNKTQPSYVPRFPMETTKPKSFETRRRISNSSISHTQSSLLYSQ</sequence>
<keyword id="KW-1003">Cell membrane</keyword>
<keyword id="KW-0472">Membrane</keyword>
<keyword id="KW-0597">Phosphoprotein</keyword>
<keyword id="KW-0607">Phytochrome signaling pathway</keyword>
<keyword id="KW-1185">Reference proteome</keyword>
<organism>
    <name type="scientific">Arabidopsis thaliana</name>
    <name type="common">Mouse-ear cress</name>
    <dbReference type="NCBI Taxonomy" id="3702"/>
    <lineage>
        <taxon>Eukaryota</taxon>
        <taxon>Viridiplantae</taxon>
        <taxon>Streptophyta</taxon>
        <taxon>Embryophyta</taxon>
        <taxon>Tracheophyta</taxon>
        <taxon>Spermatophyta</taxon>
        <taxon>Magnoliopsida</taxon>
        <taxon>eudicotyledons</taxon>
        <taxon>Gunneridae</taxon>
        <taxon>Pentapetalae</taxon>
        <taxon>rosids</taxon>
        <taxon>malvids</taxon>
        <taxon>Brassicales</taxon>
        <taxon>Brassicaceae</taxon>
        <taxon>Camelineae</taxon>
        <taxon>Arabidopsis</taxon>
    </lineage>
</organism>
<reference key="1">
    <citation type="journal article" date="1999" name="Science">
        <title>PKS1, a substrate phosphorylated by phytochrome that modulates light signaling in Arabidopsis.</title>
        <authorList>
            <person name="Fankhauser C."/>
            <person name="Yeh K.C."/>
            <person name="Lagarias J.C."/>
            <person name="Zhang H."/>
            <person name="Elich T.D."/>
            <person name="Chory J."/>
        </authorList>
    </citation>
    <scope>NUCLEOTIDE SEQUENCE [MRNA]</scope>
    <scope>FUNCTION</scope>
    <scope>INTERACTION WITH PHYA AND PHYB</scope>
    <scope>PHOSPHORYLATION</scope>
    <scope>SUBCELLULAR LOCATION</scope>
    <scope>TISSUE SPECIFICITY</scope>
    <scope>DEVELOPMENTAL STAGE</scope>
    <source>
        <strain>cv. Columbia</strain>
    </source>
</reference>
<reference key="2">
    <citation type="journal article" date="1999" name="Nature">
        <title>Sequence and analysis of chromosome 2 of the plant Arabidopsis thaliana.</title>
        <authorList>
            <person name="Lin X."/>
            <person name="Kaul S."/>
            <person name="Rounsley S.D."/>
            <person name="Shea T.P."/>
            <person name="Benito M.-I."/>
            <person name="Town C.D."/>
            <person name="Fujii C.Y."/>
            <person name="Mason T.M."/>
            <person name="Bowman C.L."/>
            <person name="Barnstead M.E."/>
            <person name="Feldblyum T.V."/>
            <person name="Buell C.R."/>
            <person name="Ketchum K.A."/>
            <person name="Lee J.J."/>
            <person name="Ronning C.M."/>
            <person name="Koo H.L."/>
            <person name="Moffat K.S."/>
            <person name="Cronin L.A."/>
            <person name="Shen M."/>
            <person name="Pai G."/>
            <person name="Van Aken S."/>
            <person name="Umayam L."/>
            <person name="Tallon L.J."/>
            <person name="Gill J.E."/>
            <person name="Adams M.D."/>
            <person name="Carrera A.J."/>
            <person name="Creasy T.H."/>
            <person name="Goodman H.M."/>
            <person name="Somerville C.R."/>
            <person name="Copenhaver G.P."/>
            <person name="Preuss D."/>
            <person name="Nierman W.C."/>
            <person name="White O."/>
            <person name="Eisen J.A."/>
            <person name="Salzberg S.L."/>
            <person name="Fraser C.M."/>
            <person name="Venter J.C."/>
        </authorList>
    </citation>
    <scope>NUCLEOTIDE SEQUENCE [LARGE SCALE GENOMIC DNA]</scope>
    <source>
        <strain>cv. Columbia</strain>
    </source>
</reference>
<reference key="3">
    <citation type="journal article" date="2017" name="Plant J.">
        <title>Araport11: a complete reannotation of the Arabidopsis thaliana reference genome.</title>
        <authorList>
            <person name="Cheng C.Y."/>
            <person name="Krishnakumar V."/>
            <person name="Chan A.P."/>
            <person name="Thibaud-Nissen F."/>
            <person name="Schobel S."/>
            <person name="Town C.D."/>
        </authorList>
    </citation>
    <scope>GENOME REANNOTATION</scope>
    <source>
        <strain>cv. Columbia</strain>
    </source>
</reference>
<reference key="4">
    <citation type="journal article" date="2003" name="Science">
        <title>Empirical analysis of transcriptional activity in the Arabidopsis genome.</title>
        <authorList>
            <person name="Yamada K."/>
            <person name="Lim J."/>
            <person name="Dale J.M."/>
            <person name="Chen H."/>
            <person name="Shinn P."/>
            <person name="Palm C.J."/>
            <person name="Southwick A.M."/>
            <person name="Wu H.C."/>
            <person name="Kim C.J."/>
            <person name="Nguyen M."/>
            <person name="Pham P.K."/>
            <person name="Cheuk R.F."/>
            <person name="Karlin-Newmann G."/>
            <person name="Liu S.X."/>
            <person name="Lam B."/>
            <person name="Sakano H."/>
            <person name="Wu T."/>
            <person name="Yu G."/>
            <person name="Miranda M."/>
            <person name="Quach H.L."/>
            <person name="Tripp M."/>
            <person name="Chang C.H."/>
            <person name="Lee J.M."/>
            <person name="Toriumi M.J."/>
            <person name="Chan M.M."/>
            <person name="Tang C.C."/>
            <person name="Onodera C.S."/>
            <person name="Deng J.M."/>
            <person name="Akiyama K."/>
            <person name="Ansari Y."/>
            <person name="Arakawa T."/>
            <person name="Banh J."/>
            <person name="Banno F."/>
            <person name="Bowser L."/>
            <person name="Brooks S.Y."/>
            <person name="Carninci P."/>
            <person name="Chao Q."/>
            <person name="Choy N."/>
            <person name="Enju A."/>
            <person name="Goldsmith A.D."/>
            <person name="Gurjal M."/>
            <person name="Hansen N.F."/>
            <person name="Hayashizaki Y."/>
            <person name="Johnson-Hopson C."/>
            <person name="Hsuan V.W."/>
            <person name="Iida K."/>
            <person name="Karnes M."/>
            <person name="Khan S."/>
            <person name="Koesema E."/>
            <person name="Ishida J."/>
            <person name="Jiang P.X."/>
            <person name="Jones T."/>
            <person name="Kawai J."/>
            <person name="Kamiya A."/>
            <person name="Meyers C."/>
            <person name="Nakajima M."/>
            <person name="Narusaka M."/>
            <person name="Seki M."/>
            <person name="Sakurai T."/>
            <person name="Satou M."/>
            <person name="Tamse R."/>
            <person name="Vaysberg M."/>
            <person name="Wallender E.K."/>
            <person name="Wong C."/>
            <person name="Yamamura Y."/>
            <person name="Yuan S."/>
            <person name="Shinozaki K."/>
            <person name="Davis R.W."/>
            <person name="Theologis A."/>
            <person name="Ecker J.R."/>
        </authorList>
    </citation>
    <scope>NUCLEOTIDE SEQUENCE [LARGE SCALE MRNA]</scope>
    <source>
        <strain>cv. Columbia</strain>
    </source>
</reference>
<reference key="5">
    <citation type="journal article" date="2003" name="Plant Cell">
        <title>A growth regulatory loop that provides homeostasis to phytochrome a signaling.</title>
        <authorList>
            <person name="Lariguet P."/>
            <person name="Boccalandro H.E."/>
            <person name="Alonso J.M."/>
            <person name="Ecker J.R."/>
            <person name="Chory J."/>
            <person name="Casal J.J."/>
            <person name="Fankhauser C."/>
        </authorList>
    </citation>
    <scope>FUNCTION</scope>
    <scope>INDUCTION</scope>
    <scope>TISSUE SPECIFICITY</scope>
    <scope>INTERACTION WITH PKS2</scope>
    <scope>DISRUPTION PHENOTYPE</scope>
</reference>
<reference key="6">
    <citation type="journal article" date="2005" name="J. Mol. Evol.">
        <title>Plant photoreceptors: phylogenetic overview.</title>
        <authorList>
            <person name="Lariguet P."/>
            <person name="Dunand C."/>
        </authorList>
    </citation>
    <scope>GENE FAMILY</scope>
    <scope>NOMENCLATURE</scope>
</reference>
<reference key="7">
    <citation type="journal article" date="2006" name="J. Exp. Bot.">
        <title>Gene profiling of the red light signalling pathways in roots.</title>
        <authorList>
            <person name="Molas M.L."/>
            <person name="Kiss J.Z."/>
            <person name="Correll M.J."/>
        </authorList>
    </citation>
    <scope>INDUCTION</scope>
</reference>
<reference key="8">
    <citation type="journal article" date="2006" name="Proc. Natl. Acad. Sci. U.S.A.">
        <title>PHYTOCHROME KINASE SUBSTRATE 1 is a phototropin 1 binding protein required for phototropism.</title>
        <authorList>
            <person name="Lariguet P."/>
            <person name="Schepens I."/>
            <person name="Hodgson D."/>
            <person name="Pedmale U.V."/>
            <person name="Trevisan M."/>
            <person name="Kami C."/>
            <person name="de Carbonnel M."/>
            <person name="Alonso J.M."/>
            <person name="Ecker J.R."/>
            <person name="Liscum E."/>
            <person name="Fankhauser C."/>
        </authorList>
    </citation>
    <scope>FUNCTION</scope>
    <scope>SUBCELLULAR LOCATION</scope>
    <scope>TISSUE SPECIFICITY</scope>
    <scope>PHOSPHORYLATION</scope>
    <scope>INTERACTION WITH PHOT1 AND RPT3</scope>
    <scope>DISRUPTION PHENOTYPE</scope>
</reference>
<reference key="9">
    <citation type="journal article" date="2008" name="Plant Physiol.">
        <title>PHYTOCHROME KINASE SUBSTRATE1 regulates root phototropism and gravitropism.</title>
        <authorList>
            <person name="Boccalandro H.E."/>
            <person name="De Simone S.N."/>
            <person name="Bergmann-Honsberger A."/>
            <person name="Schepens I."/>
            <person name="Fankhauser C."/>
            <person name="Casal J.J."/>
        </authorList>
    </citation>
    <scope>FUNCTION</scope>
    <scope>TISSUE SPECIFICITY</scope>
    <scope>DISRUPTION PHENOTYPE</scope>
</reference>
<reference key="10">
    <citation type="journal article" date="2010" name="Plant Physiol.">
        <title>The Arabidopsis PHYTOCHROME KINASE SUBSTRATE2 protein is a phototropin signaling element that regulates leaf flattening and leaf positioning.</title>
        <authorList>
            <person name="de Carbonnel M."/>
            <person name="Davis P."/>
            <person name="Roelfsema M.R."/>
            <person name="Inoue S."/>
            <person name="Schepens I."/>
            <person name="Lariguet P."/>
            <person name="Geisler M."/>
            <person name="Shimazaki K."/>
            <person name="Hangarter R."/>
            <person name="Fankhauser C."/>
        </authorList>
    </citation>
    <scope>FUNCTION</scope>
    <scope>INTERACTION WITH PKS1; RPT3; PHOT1 AND PHOT2</scope>
    <scope>SUBCELLULAR LOCATION</scope>
    <scope>DISRUPTION PHENOTYPE</scope>
</reference>
<dbReference type="EMBL" id="AF149053">
    <property type="protein sequence ID" value="AAD38033.1"/>
    <property type="molecule type" value="mRNA"/>
</dbReference>
<dbReference type="EMBL" id="AC004138">
    <property type="protein sequence ID" value="AAC32913.1"/>
    <property type="molecule type" value="Genomic_DNA"/>
</dbReference>
<dbReference type="EMBL" id="CP002685">
    <property type="protein sequence ID" value="AEC05643.1"/>
    <property type="molecule type" value="Genomic_DNA"/>
</dbReference>
<dbReference type="EMBL" id="AF325064">
    <property type="protein sequence ID" value="AAK17132.1"/>
    <property type="molecule type" value="mRNA"/>
</dbReference>
<dbReference type="EMBL" id="AY052708">
    <property type="protein sequence ID" value="AAK96612.1"/>
    <property type="molecule type" value="mRNA"/>
</dbReference>
<dbReference type="EMBL" id="AY063721">
    <property type="protein sequence ID" value="AAL36071.1"/>
    <property type="molecule type" value="mRNA"/>
</dbReference>
<dbReference type="PIR" id="E84442">
    <property type="entry name" value="E84442"/>
</dbReference>
<dbReference type="PIR" id="T52304">
    <property type="entry name" value="T52304"/>
</dbReference>
<dbReference type="RefSeq" id="NP_565292.1">
    <property type="nucleotide sequence ID" value="NM_126347.3"/>
</dbReference>
<dbReference type="BioGRID" id="225">
    <property type="interactions" value="8"/>
</dbReference>
<dbReference type="DIP" id="DIP-34783N"/>
<dbReference type="FunCoup" id="Q9SWI1">
    <property type="interactions" value="82"/>
</dbReference>
<dbReference type="IntAct" id="Q9SWI1">
    <property type="interactions" value="9"/>
</dbReference>
<dbReference type="STRING" id="3702.Q9SWI1"/>
<dbReference type="iPTMnet" id="Q9SWI1"/>
<dbReference type="PaxDb" id="3702-AT2G02950.1"/>
<dbReference type="ProteomicsDB" id="236164"/>
<dbReference type="EnsemblPlants" id="AT2G02950.1">
    <property type="protein sequence ID" value="AT2G02950.1"/>
    <property type="gene ID" value="AT2G02950"/>
</dbReference>
<dbReference type="GeneID" id="814823"/>
<dbReference type="Gramene" id="AT2G02950.1">
    <property type="protein sequence ID" value="AT2G02950.1"/>
    <property type="gene ID" value="AT2G02950"/>
</dbReference>
<dbReference type="KEGG" id="ath:AT2G02950"/>
<dbReference type="Araport" id="AT2G02950"/>
<dbReference type="TAIR" id="AT2G02950">
    <property type="gene designation" value="PKS1"/>
</dbReference>
<dbReference type="eggNOG" id="ENOG502QSBI">
    <property type="taxonomic scope" value="Eukaryota"/>
</dbReference>
<dbReference type="HOGENOM" id="CLU_048817_0_0_1"/>
<dbReference type="InParanoid" id="Q9SWI1"/>
<dbReference type="OMA" id="MSCKSHK"/>
<dbReference type="PhylomeDB" id="Q9SWI1"/>
<dbReference type="PRO" id="PR:Q9SWI1"/>
<dbReference type="Proteomes" id="UP000006548">
    <property type="component" value="Chromosome 2"/>
</dbReference>
<dbReference type="ExpressionAtlas" id="Q9SWI1">
    <property type="expression patterns" value="baseline and differential"/>
</dbReference>
<dbReference type="GO" id="GO:0005737">
    <property type="term" value="C:cytoplasm"/>
    <property type="evidence" value="ECO:0000303"/>
    <property type="project" value="TAIR"/>
</dbReference>
<dbReference type="GO" id="GO:0005886">
    <property type="term" value="C:plasma membrane"/>
    <property type="evidence" value="ECO:0000314"/>
    <property type="project" value="TAIR"/>
</dbReference>
<dbReference type="GO" id="GO:0009638">
    <property type="term" value="P:phototropism"/>
    <property type="evidence" value="ECO:0000316"/>
    <property type="project" value="TAIR"/>
</dbReference>
<dbReference type="GO" id="GO:0009958">
    <property type="term" value="P:positive gravitropism"/>
    <property type="evidence" value="ECO:0000315"/>
    <property type="project" value="TAIR"/>
</dbReference>
<dbReference type="GO" id="GO:0010017">
    <property type="term" value="P:red or far-red light signaling pathway"/>
    <property type="evidence" value="ECO:0000315"/>
    <property type="project" value="TAIR"/>
</dbReference>
<dbReference type="GO" id="GO:0009585">
    <property type="term" value="P:red, far-red light phototransduction"/>
    <property type="evidence" value="ECO:0000315"/>
    <property type="project" value="TAIR"/>
</dbReference>
<dbReference type="GO" id="GO:0010218">
    <property type="term" value="P:response to far red light"/>
    <property type="evidence" value="ECO:0000270"/>
    <property type="project" value="TAIR"/>
</dbReference>
<dbReference type="GO" id="GO:0010114">
    <property type="term" value="P:response to red light"/>
    <property type="evidence" value="ECO:0000270"/>
    <property type="project" value="TAIR"/>
</dbReference>
<dbReference type="InterPro" id="IPR039615">
    <property type="entry name" value="PKS"/>
</dbReference>
<dbReference type="PANTHER" id="PTHR33781:SF4">
    <property type="entry name" value="PROTEIN PHYTOCHROME KINASE SUBSTRATE 1"/>
    <property type="match status" value="1"/>
</dbReference>
<dbReference type="PANTHER" id="PTHR33781">
    <property type="entry name" value="PROTEIN PHYTOCHROME KINASE SUBSTRATE 1-RELATED"/>
    <property type="match status" value="1"/>
</dbReference>
<evidence type="ECO:0000250" key="1">
    <source>
        <dbReference type="UniProtKB" id="Q9M9T4"/>
    </source>
</evidence>
<evidence type="ECO:0000256" key="2">
    <source>
        <dbReference type="SAM" id="MobiDB-lite"/>
    </source>
</evidence>
<evidence type="ECO:0000269" key="3">
    <source>
    </source>
</evidence>
<evidence type="ECO:0000269" key="4">
    <source>
    </source>
</evidence>
<evidence type="ECO:0000269" key="5">
    <source>
    </source>
</evidence>
<evidence type="ECO:0000269" key="6">
    <source>
    </source>
</evidence>
<evidence type="ECO:0000269" key="7">
    <source>
    </source>
</evidence>
<evidence type="ECO:0000269" key="8">
    <source>
    </source>
</evidence>
<evidence type="ECO:0000305" key="9"/>
<name>PKS1_ARATH</name>
<proteinExistence type="evidence at protein level"/>
<comment type="function">
    <text evidence="3 4 5 7 8">May be responsible for light-regulated cytoplasmic sequestration of phytochromes or may be a negative regulator of phytochrome B signaling. Component of the network that modulates the very low-fluence response (VLFR) branch of phyA signaling. Acts positively in PHOT1 signaling. Regulates phytochrome-mediated photomorphogenesis and hypocotyl phototropism. Involved in the control of leaf flattening and leaf positioning. Promotes negative root phototropism and negatively regulates root gravitropism. May act by controlling auxin homeostasis.</text>
</comment>
<comment type="subunit">
    <text evidence="3 4 5 8">Interacts with PKS2, RPT3, PHOT1, PHOT2 and the C-termini of both phytochromes A (phyA) and B (phyB). Binds both spectral forms of phytochrome, Pr and Pfr.</text>
</comment>
<comment type="interaction">
    <interactant intactId="EBI-626200">
        <id>Q9SWI1</id>
    </interactant>
    <interactant intactId="EBI-540923">
        <id>O22286</id>
        <label>BPM3</label>
    </interactant>
    <organismsDiffer>false</organismsDiffer>
    <experiments>3</experiments>
</comment>
<comment type="interaction">
    <interactant intactId="EBI-626200">
        <id>Q9SWI1</id>
    </interactant>
    <interactant intactId="EBI-4426649">
        <id>Q17TI5</id>
        <label>BRX</label>
    </interactant>
    <organismsDiffer>false</organismsDiffer>
    <experiments>3</experiments>
</comment>
<comment type="interaction">
    <interactant intactId="EBI-626200">
        <id>Q9SWI1</id>
    </interactant>
    <interactant intactId="EBI-1553849">
        <id>O48963</id>
        <label>PHOT1</label>
    </interactant>
    <organismsDiffer>false</organismsDiffer>
    <experiments>3</experiments>
</comment>
<comment type="interaction">
    <interactant intactId="EBI-626200">
        <id>Q9SWI1</id>
    </interactant>
    <interactant intactId="EBI-624446">
        <id>P14712</id>
        <label>PHYA</label>
    </interactant>
    <organismsDiffer>false</organismsDiffer>
    <experiments>3</experiments>
</comment>
<comment type="interaction">
    <interactant intactId="EBI-626200">
        <id>Q9SWI1</id>
    </interactant>
    <interactant intactId="EBI-300727">
        <id>P14713</id>
        <label>PHYB</label>
    </interactant>
    <organismsDiffer>false</organismsDiffer>
    <experiments>2</experiments>
</comment>
<comment type="interaction">
    <interactant intactId="EBI-626200">
        <id>Q9SWI1</id>
    </interactant>
    <interactant intactId="EBI-1553842">
        <id>Q9FMF5</id>
        <label>RPT3</label>
    </interactant>
    <organismsDiffer>false</organismsDiffer>
    <experiments>2</experiments>
</comment>
<comment type="subcellular location">
    <subcellularLocation>
        <location evidence="3 5 8">Cell membrane</location>
        <topology evidence="3 5 8">Peripheral membrane protein</topology>
    </subcellularLocation>
</comment>
<comment type="tissue specificity">
    <text evidence="3 4 5 7">Expressed in young seedlings in both darkness and light. Moderate in leaves and very low in roots and flowers. Expressed in the elongation zone of the root and hypocotyl.</text>
</comment>
<comment type="developmental stage">
    <text evidence="3">Decreases with development.</text>
</comment>
<comment type="induction">
    <text evidence="4 6">Up-regulated by white, red, far-red and blue light.</text>
</comment>
<comment type="PTM">
    <text evidence="3 5">Phosphorylated on Ser and to a lower extent on Thr by phytochromes. Phosphorylation is stimulated twofold by red light.</text>
</comment>
<comment type="disruption phenotype">
    <text evidence="4 5 7 8">Increased hypocotyl growth inhibition and cotyledon unfolding responses in the very low fluence response (VLFR) mode. Reduced phototropic response. Reduced hyponasty when grown under blue light. Loss of negative root phototropism. Auxin accumulation in protoplasts.</text>
</comment>
<comment type="miscellaneous">
    <text>PKS1, PKS2 and/or PKS4 are essential for phototropism but not for inhibition of gravitropism under long-term blue light irradiation.</text>
</comment>
<comment type="similarity">
    <text evidence="9">Belongs to the PKS family.</text>
</comment>
<feature type="chain" id="PRO_0000058450" description="Protein PHYTOCHROME KINASE SUBSTRATE 1">
    <location>
        <begin position="1"/>
        <end position="439"/>
    </location>
</feature>
<feature type="region of interest" description="Disordered" evidence="2">
    <location>
        <begin position="1"/>
        <end position="22"/>
    </location>
</feature>
<feature type="region of interest" description="Disordered" evidence="2">
    <location>
        <begin position="54"/>
        <end position="80"/>
    </location>
</feature>
<feature type="region of interest" description="Disordered" evidence="2">
    <location>
        <begin position="100"/>
        <end position="139"/>
    </location>
</feature>
<feature type="region of interest" description="Disordered" evidence="2">
    <location>
        <begin position="259"/>
        <end position="311"/>
    </location>
</feature>
<feature type="region of interest" description="Disordered" evidence="2">
    <location>
        <begin position="355"/>
        <end position="439"/>
    </location>
</feature>
<feature type="compositionally biased region" description="Polar residues" evidence="2">
    <location>
        <begin position="1"/>
        <end position="14"/>
    </location>
</feature>
<feature type="compositionally biased region" description="Basic and acidic residues" evidence="2">
    <location>
        <begin position="63"/>
        <end position="79"/>
    </location>
</feature>
<feature type="compositionally biased region" description="Polar residues" evidence="2">
    <location>
        <begin position="100"/>
        <end position="109"/>
    </location>
</feature>
<feature type="compositionally biased region" description="Polar residues" evidence="2">
    <location>
        <begin position="118"/>
        <end position="139"/>
    </location>
</feature>
<feature type="compositionally biased region" description="Basic and acidic residues" evidence="2">
    <location>
        <begin position="412"/>
        <end position="421"/>
    </location>
</feature>
<feature type="compositionally biased region" description="Low complexity" evidence="2">
    <location>
        <begin position="424"/>
        <end position="439"/>
    </location>
</feature>
<feature type="modified residue" description="Phosphoserine" evidence="1">
    <location>
        <position position="238"/>
    </location>
</feature>
<feature type="modified residue" description="Phosphoserine" evidence="1">
    <location>
        <position position="244"/>
    </location>
</feature>
<feature type="sequence conflict" description="In Ref. 1; AAD38033." evidence="9" ref="1">
    <original>E</original>
    <variation>D</variation>
    <location>
        <position position="196"/>
    </location>
</feature>